<protein>
    <recommendedName>
        <fullName evidence="1">Large ribosomal subunit protein uL10</fullName>
    </recommendedName>
    <alternativeName>
        <fullName evidence="2">50S ribosomal protein L10</fullName>
    </alternativeName>
</protein>
<feature type="chain" id="PRO_1000059888" description="Large ribosomal subunit protein uL10">
    <location>
        <begin position="1"/>
        <end position="165"/>
    </location>
</feature>
<comment type="function">
    <text evidence="1">Forms part of the ribosomal stalk, playing a central role in the interaction of the ribosome with GTP-bound translation factors.</text>
</comment>
<comment type="subunit">
    <text evidence="1">Part of the ribosomal stalk of the 50S ribosomal subunit. The N-terminus interacts with L11 and the large rRNA to form the base of the stalk. The C-terminus forms an elongated spine to which L12 dimers bind in a sequential fashion forming a multimeric L10(L12)X complex.</text>
</comment>
<comment type="similarity">
    <text evidence="1">Belongs to the universal ribosomal protein uL10 family.</text>
</comment>
<dbReference type="EMBL" id="CP000653">
    <property type="protein sequence ID" value="ABP58885.1"/>
    <property type="molecule type" value="Genomic_DNA"/>
</dbReference>
<dbReference type="RefSeq" id="WP_007704673.1">
    <property type="nucleotide sequence ID" value="NC_009436.1"/>
</dbReference>
<dbReference type="STRING" id="399742.Ent638_0195"/>
<dbReference type="GeneID" id="97599804"/>
<dbReference type="KEGG" id="ent:Ent638_0195"/>
<dbReference type="eggNOG" id="COG0244">
    <property type="taxonomic scope" value="Bacteria"/>
</dbReference>
<dbReference type="HOGENOM" id="CLU_092227_0_2_6"/>
<dbReference type="OrthoDB" id="9808307at2"/>
<dbReference type="Proteomes" id="UP000000230">
    <property type="component" value="Chromosome"/>
</dbReference>
<dbReference type="GO" id="GO:0015934">
    <property type="term" value="C:large ribosomal subunit"/>
    <property type="evidence" value="ECO:0007669"/>
    <property type="project" value="InterPro"/>
</dbReference>
<dbReference type="GO" id="GO:0070180">
    <property type="term" value="F:large ribosomal subunit rRNA binding"/>
    <property type="evidence" value="ECO:0007669"/>
    <property type="project" value="UniProtKB-UniRule"/>
</dbReference>
<dbReference type="GO" id="GO:0003735">
    <property type="term" value="F:structural constituent of ribosome"/>
    <property type="evidence" value="ECO:0007669"/>
    <property type="project" value="InterPro"/>
</dbReference>
<dbReference type="GO" id="GO:0006412">
    <property type="term" value="P:translation"/>
    <property type="evidence" value="ECO:0007669"/>
    <property type="project" value="UniProtKB-UniRule"/>
</dbReference>
<dbReference type="CDD" id="cd05797">
    <property type="entry name" value="Ribosomal_L10"/>
    <property type="match status" value="1"/>
</dbReference>
<dbReference type="FunFam" id="3.30.70.1730:FF:000001">
    <property type="entry name" value="50S ribosomal protein L10"/>
    <property type="match status" value="1"/>
</dbReference>
<dbReference type="Gene3D" id="3.30.70.1730">
    <property type="match status" value="1"/>
</dbReference>
<dbReference type="Gene3D" id="6.10.250.2350">
    <property type="match status" value="1"/>
</dbReference>
<dbReference type="HAMAP" id="MF_00362">
    <property type="entry name" value="Ribosomal_uL10"/>
    <property type="match status" value="1"/>
</dbReference>
<dbReference type="InterPro" id="IPR001790">
    <property type="entry name" value="Ribosomal_uL10"/>
</dbReference>
<dbReference type="InterPro" id="IPR043141">
    <property type="entry name" value="Ribosomal_uL10-like_sf"/>
</dbReference>
<dbReference type="InterPro" id="IPR022973">
    <property type="entry name" value="Ribosomal_uL10_bac"/>
</dbReference>
<dbReference type="InterPro" id="IPR047865">
    <property type="entry name" value="Ribosomal_uL10_bac_type"/>
</dbReference>
<dbReference type="InterPro" id="IPR002363">
    <property type="entry name" value="Ribosomal_uL10_CS_bac"/>
</dbReference>
<dbReference type="NCBIfam" id="NF000955">
    <property type="entry name" value="PRK00099.1-1"/>
    <property type="match status" value="1"/>
</dbReference>
<dbReference type="PANTHER" id="PTHR11560">
    <property type="entry name" value="39S RIBOSOMAL PROTEIN L10, MITOCHONDRIAL"/>
    <property type="match status" value="1"/>
</dbReference>
<dbReference type="Pfam" id="PF00466">
    <property type="entry name" value="Ribosomal_L10"/>
    <property type="match status" value="1"/>
</dbReference>
<dbReference type="SUPFAM" id="SSF160369">
    <property type="entry name" value="Ribosomal protein L10-like"/>
    <property type="match status" value="1"/>
</dbReference>
<dbReference type="PROSITE" id="PS01109">
    <property type="entry name" value="RIBOSOMAL_L10"/>
    <property type="match status" value="1"/>
</dbReference>
<gene>
    <name evidence="1" type="primary">rplJ</name>
    <name type="ordered locus">Ent638_0195</name>
</gene>
<evidence type="ECO:0000255" key="1">
    <source>
        <dbReference type="HAMAP-Rule" id="MF_00362"/>
    </source>
</evidence>
<evidence type="ECO:0000305" key="2"/>
<accession>A4W5A5</accession>
<proteinExistence type="inferred from homology"/>
<reference key="1">
    <citation type="journal article" date="2010" name="PLoS Genet.">
        <title>Genome sequence of the plant growth promoting endophytic bacterium Enterobacter sp. 638.</title>
        <authorList>
            <person name="Taghavi S."/>
            <person name="van der Lelie D."/>
            <person name="Hoffman A."/>
            <person name="Zhang Y.B."/>
            <person name="Walla M.D."/>
            <person name="Vangronsveld J."/>
            <person name="Newman L."/>
            <person name="Monchy S."/>
        </authorList>
    </citation>
    <scope>NUCLEOTIDE SEQUENCE [LARGE SCALE GENOMIC DNA]</scope>
    <source>
        <strain>638</strain>
    </source>
</reference>
<keyword id="KW-0687">Ribonucleoprotein</keyword>
<keyword id="KW-0689">Ribosomal protein</keyword>
<keyword id="KW-0694">RNA-binding</keyword>
<keyword id="KW-0699">rRNA-binding</keyword>
<name>RL10_ENT38</name>
<sequence>MALNLQDKQAIVAEVSEVAKGALSAVVADSRGVTVDKMTELRKAGREAGVYMRVVRNTLLRRVVEGTQFECLKDAFVGPTLIAYSMEHPGAAARLFKDFAKANAKFEVKAAAFEGELIPASQIDRLATLPTYEEAIARLMATMKEASAGKLVRTLAAVRDAKEAA</sequence>
<organism>
    <name type="scientific">Enterobacter sp. (strain 638)</name>
    <dbReference type="NCBI Taxonomy" id="399742"/>
    <lineage>
        <taxon>Bacteria</taxon>
        <taxon>Pseudomonadati</taxon>
        <taxon>Pseudomonadota</taxon>
        <taxon>Gammaproteobacteria</taxon>
        <taxon>Enterobacterales</taxon>
        <taxon>Enterobacteriaceae</taxon>
        <taxon>Enterobacter</taxon>
    </lineage>
</organism>